<organism>
    <name type="scientific">Mus musculus</name>
    <name type="common">Mouse</name>
    <dbReference type="NCBI Taxonomy" id="10090"/>
    <lineage>
        <taxon>Eukaryota</taxon>
        <taxon>Metazoa</taxon>
        <taxon>Chordata</taxon>
        <taxon>Craniata</taxon>
        <taxon>Vertebrata</taxon>
        <taxon>Euteleostomi</taxon>
        <taxon>Mammalia</taxon>
        <taxon>Eutheria</taxon>
        <taxon>Euarchontoglires</taxon>
        <taxon>Glires</taxon>
        <taxon>Rodentia</taxon>
        <taxon>Myomorpha</taxon>
        <taxon>Muroidea</taxon>
        <taxon>Muridae</taxon>
        <taxon>Murinae</taxon>
        <taxon>Mus</taxon>
        <taxon>Mus</taxon>
    </lineage>
</organism>
<accession>Q78HU3</accession>
<sequence>MDPGTDSAPLAGLVWSSASAPPPPGFSAITCTVEGGTASFGRGFAQKAGYFLCLSTLGIPENPQDNVVVDMQIVMDKGPLPSGFSAVNDPQDIKASVSKKKRMCVKLMPLGTADVVVSDVKLSGKTKTVPGYLRVGDIGGFAIWCKKSKAPRPVPKPRTLSQDMRGLSLDPPKEPSKGSHPERTLSRLGSRASTLRRTDSIYEASSLYGISAMDGVPFTLHPRFEGKSCGPLNLSAFGDLTIKSLADIEKEYNYGFVVEKTAAARLPPSVS</sequence>
<feature type="chain" id="PRO_0000249070" description="Multivesicular body subunit 12A">
    <location>
        <begin position="1"/>
        <end position="271"/>
    </location>
</feature>
<feature type="domain" description="MABP" evidence="4">
    <location>
        <begin position="7"/>
        <end position="149"/>
    </location>
</feature>
<feature type="domain" description="UMA" evidence="3">
    <location>
        <begin position="213"/>
        <end position="263"/>
    </location>
</feature>
<feature type="region of interest" description="Disordered" evidence="5">
    <location>
        <begin position="149"/>
        <end position="192"/>
    </location>
</feature>
<feature type="region of interest" description="Interaction with TSG101, VPS37B and VPS28" evidence="1">
    <location>
        <begin position="190"/>
        <end position="271"/>
    </location>
</feature>
<feature type="short sequence motif" description="SH3-binding">
    <location>
        <begin position="153"/>
        <end position="158"/>
    </location>
</feature>
<feature type="compositionally biased region" description="Basic and acidic residues" evidence="5">
    <location>
        <begin position="171"/>
        <end position="185"/>
    </location>
</feature>
<feature type="modified residue" description="Phosphothreonine" evidence="2">
    <location>
        <position position="128"/>
    </location>
</feature>
<feature type="modified residue" description="Phosphoserine" evidence="2">
    <location>
        <position position="161"/>
    </location>
</feature>
<feature type="modified residue" description="Phosphoserine" evidence="2">
    <location>
        <position position="168"/>
    </location>
</feature>
<feature type="modified residue" description="Phosphoserine" evidence="2">
    <location>
        <position position="193"/>
    </location>
</feature>
<feature type="modified residue" description="Phosphoserine" evidence="7">
    <location>
        <position position="200"/>
    </location>
</feature>
<feature type="modified residue" description="Phosphotyrosine" evidence="7">
    <location>
        <position position="202"/>
    </location>
</feature>
<feature type="modified residue" description="Phosphoserine" evidence="2">
    <location>
        <position position="205"/>
    </location>
</feature>
<name>MB12A_MOUSE</name>
<keyword id="KW-0963">Cytoplasm</keyword>
<keyword id="KW-0206">Cytoskeleton</keyword>
<keyword id="KW-0967">Endosome</keyword>
<keyword id="KW-0472">Membrane</keyword>
<keyword id="KW-0539">Nucleus</keyword>
<keyword id="KW-0597">Phosphoprotein</keyword>
<keyword id="KW-0653">Protein transport</keyword>
<keyword id="KW-1185">Reference proteome</keyword>
<keyword id="KW-0729">SH3-binding</keyword>
<keyword id="KW-0813">Transport</keyword>
<protein>
    <recommendedName>
        <fullName>Multivesicular body subunit 12A</fullName>
    </recommendedName>
    <alternativeName>
        <fullName>ESCRT-I complex subunit MVB12A</fullName>
    </alternativeName>
    <alternativeName>
        <fullName>Protein FAM125A</fullName>
    </alternativeName>
</protein>
<reference key="1">
    <citation type="journal article" date="2004" name="Genome Res.">
        <title>The status, quality, and expansion of the NIH full-length cDNA project: the Mammalian Gene Collection (MGC).</title>
        <authorList>
            <consortium name="The MGC Project Team"/>
        </authorList>
    </citation>
    <scope>NUCLEOTIDE SEQUENCE [LARGE SCALE MRNA]</scope>
    <source>
        <strain>Czech II</strain>
        <strain>FVB/N</strain>
        <tissue>Liver</tissue>
        <tissue>Mammary tumor</tissue>
    </source>
</reference>
<reference key="2">
    <citation type="journal article" date="2007" name="Proc. Natl. Acad. Sci. U.S.A.">
        <title>Large-scale phosphorylation analysis of mouse liver.</title>
        <authorList>
            <person name="Villen J."/>
            <person name="Beausoleil S.A."/>
            <person name="Gerber S.A."/>
            <person name="Gygi S.P."/>
        </authorList>
    </citation>
    <scope>IDENTIFICATION BY MASS SPECTROMETRY [LARGE SCALE ANALYSIS]</scope>
    <source>
        <tissue>Liver</tissue>
    </source>
</reference>
<reference key="3">
    <citation type="journal article" date="2010" name="Cell">
        <title>A tissue-specific atlas of mouse protein phosphorylation and expression.</title>
        <authorList>
            <person name="Huttlin E.L."/>
            <person name="Jedrychowski M.P."/>
            <person name="Elias J.E."/>
            <person name="Goswami T."/>
            <person name="Rad R."/>
            <person name="Beausoleil S.A."/>
            <person name="Villen J."/>
            <person name="Haas W."/>
            <person name="Sowa M.E."/>
            <person name="Gygi S.P."/>
        </authorList>
    </citation>
    <scope>PHOSPHORYLATION [LARGE SCALE ANALYSIS] AT SER-200 AND TYR-202</scope>
    <scope>IDENTIFICATION BY MASS SPECTROMETRY [LARGE SCALE ANALYSIS]</scope>
    <source>
        <tissue>Brain</tissue>
        <tissue>Brown adipose tissue</tissue>
        <tissue>Kidney</tissue>
        <tissue>Liver</tissue>
        <tissue>Lung</tissue>
        <tissue>Pancreas</tissue>
        <tissue>Spleen</tissue>
        <tissue>Testis</tissue>
    </source>
</reference>
<proteinExistence type="evidence at protein level"/>
<dbReference type="EMBL" id="BC020119">
    <property type="protein sequence ID" value="AAH20119.1"/>
    <property type="molecule type" value="mRNA"/>
</dbReference>
<dbReference type="EMBL" id="BC027419">
    <property type="protein sequence ID" value="AAH27419.1"/>
    <property type="molecule type" value="mRNA"/>
</dbReference>
<dbReference type="EMBL" id="BC087734">
    <property type="protein sequence ID" value="AAH87734.1"/>
    <property type="molecule type" value="mRNA"/>
</dbReference>
<dbReference type="CCDS" id="CCDS22398.1"/>
<dbReference type="RefSeq" id="NP_082893.1">
    <property type="nucleotide sequence ID" value="NM_028617.2"/>
</dbReference>
<dbReference type="SMR" id="Q78HU3"/>
<dbReference type="BioGRID" id="216204">
    <property type="interactions" value="3"/>
</dbReference>
<dbReference type="FunCoup" id="Q78HU3">
    <property type="interactions" value="1606"/>
</dbReference>
<dbReference type="STRING" id="10090.ENSMUSP00000034272"/>
<dbReference type="iPTMnet" id="Q78HU3"/>
<dbReference type="PhosphoSitePlus" id="Q78HU3"/>
<dbReference type="jPOST" id="Q78HU3"/>
<dbReference type="PaxDb" id="10090-ENSMUSP00000034272"/>
<dbReference type="PeptideAtlas" id="Q78HU3"/>
<dbReference type="ProteomicsDB" id="252738"/>
<dbReference type="Pumba" id="Q78HU3"/>
<dbReference type="Antibodypedia" id="51512">
    <property type="antibodies" value="32 antibodies from 12 providers"/>
</dbReference>
<dbReference type="Ensembl" id="ENSMUST00000034272.9">
    <property type="protein sequence ID" value="ENSMUSP00000034272.8"/>
    <property type="gene ID" value="ENSMUSG00000031813.9"/>
</dbReference>
<dbReference type="GeneID" id="73711"/>
<dbReference type="KEGG" id="mmu:73711"/>
<dbReference type="UCSC" id="uc009mdt.1">
    <property type="organism name" value="mouse"/>
</dbReference>
<dbReference type="AGR" id="MGI:1920961"/>
<dbReference type="CTD" id="93343"/>
<dbReference type="MGI" id="MGI:1920961">
    <property type="gene designation" value="Mvb12a"/>
</dbReference>
<dbReference type="VEuPathDB" id="HostDB:ENSMUSG00000031813"/>
<dbReference type="eggNOG" id="KOG4000">
    <property type="taxonomic scope" value="Eukaryota"/>
</dbReference>
<dbReference type="GeneTree" id="ENSGT00940000160542"/>
<dbReference type="HOGENOM" id="CLU_064823_2_0_1"/>
<dbReference type="InParanoid" id="Q78HU3"/>
<dbReference type="OMA" id="KYGYYLC"/>
<dbReference type="OrthoDB" id="6021306at2759"/>
<dbReference type="PhylomeDB" id="Q78HU3"/>
<dbReference type="TreeFam" id="TF314477"/>
<dbReference type="Reactome" id="R-MMU-917729">
    <property type="pathway name" value="Endosomal Sorting Complex Required For Transport (ESCRT)"/>
</dbReference>
<dbReference type="BioGRID-ORCS" id="73711">
    <property type="hits" value="3 hits in 76 CRISPR screens"/>
</dbReference>
<dbReference type="ChiTaRS" id="Mvb12a">
    <property type="organism name" value="mouse"/>
</dbReference>
<dbReference type="PRO" id="PR:Q78HU3"/>
<dbReference type="Proteomes" id="UP000000589">
    <property type="component" value="Chromosome 8"/>
</dbReference>
<dbReference type="RNAct" id="Q78HU3">
    <property type="molecule type" value="protein"/>
</dbReference>
<dbReference type="Bgee" id="ENSMUSG00000031813">
    <property type="expression patterns" value="Expressed in right kidney and 246 other cell types or tissues"/>
</dbReference>
<dbReference type="ExpressionAtlas" id="Q78HU3">
    <property type="expression patterns" value="baseline and differential"/>
</dbReference>
<dbReference type="GO" id="GO:0005813">
    <property type="term" value="C:centrosome"/>
    <property type="evidence" value="ECO:0007669"/>
    <property type="project" value="UniProtKB-SubCell"/>
</dbReference>
<dbReference type="GO" id="GO:0005829">
    <property type="term" value="C:cytosol"/>
    <property type="evidence" value="ECO:0007669"/>
    <property type="project" value="Ensembl"/>
</dbReference>
<dbReference type="GO" id="GO:0000813">
    <property type="term" value="C:ESCRT I complex"/>
    <property type="evidence" value="ECO:0007669"/>
    <property type="project" value="Ensembl"/>
</dbReference>
<dbReference type="GO" id="GO:0031902">
    <property type="term" value="C:late endosome membrane"/>
    <property type="evidence" value="ECO:0007669"/>
    <property type="project" value="UniProtKB-SubCell"/>
</dbReference>
<dbReference type="GO" id="GO:0005634">
    <property type="term" value="C:nucleus"/>
    <property type="evidence" value="ECO:0007669"/>
    <property type="project" value="UniProtKB-SubCell"/>
</dbReference>
<dbReference type="GO" id="GO:0008289">
    <property type="term" value="F:lipid binding"/>
    <property type="evidence" value="ECO:0007669"/>
    <property type="project" value="Ensembl"/>
</dbReference>
<dbReference type="GO" id="GO:0017124">
    <property type="term" value="F:SH3 domain binding"/>
    <property type="evidence" value="ECO:0007669"/>
    <property type="project" value="UniProtKB-KW"/>
</dbReference>
<dbReference type="GO" id="GO:0043130">
    <property type="term" value="F:ubiquitin binding"/>
    <property type="evidence" value="ECO:0007669"/>
    <property type="project" value="Ensembl"/>
</dbReference>
<dbReference type="GO" id="GO:0015031">
    <property type="term" value="P:protein transport"/>
    <property type="evidence" value="ECO:0007669"/>
    <property type="project" value="UniProtKB-KW"/>
</dbReference>
<dbReference type="GO" id="GO:0042058">
    <property type="term" value="P:regulation of epidermal growth factor receptor signaling pathway"/>
    <property type="evidence" value="ECO:0007669"/>
    <property type="project" value="Ensembl"/>
</dbReference>
<dbReference type="GO" id="GO:0046755">
    <property type="term" value="P:viral budding"/>
    <property type="evidence" value="ECO:0007669"/>
    <property type="project" value="Ensembl"/>
</dbReference>
<dbReference type="GO" id="GO:0019075">
    <property type="term" value="P:virus maturation"/>
    <property type="evidence" value="ECO:0007669"/>
    <property type="project" value="Ensembl"/>
</dbReference>
<dbReference type="FunFam" id="2.100.10.50:FF:000003">
    <property type="entry name" value="Multivesicular body subunit 12A"/>
    <property type="match status" value="1"/>
</dbReference>
<dbReference type="Gene3D" id="2.100.10.50">
    <property type="match status" value="1"/>
</dbReference>
<dbReference type="InterPro" id="IPR023341">
    <property type="entry name" value="MABP"/>
</dbReference>
<dbReference type="InterPro" id="IPR040335">
    <property type="entry name" value="MVB12A"/>
</dbReference>
<dbReference type="InterPro" id="IPR018798">
    <property type="entry name" value="MVB12A/B"/>
</dbReference>
<dbReference type="InterPro" id="IPR023340">
    <property type="entry name" value="UMA"/>
</dbReference>
<dbReference type="PANTHER" id="PTHR31612">
    <property type="entry name" value="MULTIVESICULAR BODY SUBUNIT 12A"/>
    <property type="match status" value="1"/>
</dbReference>
<dbReference type="PANTHER" id="PTHR31612:SF2">
    <property type="entry name" value="MULTIVESICULAR BODY SUBUNIT 12A"/>
    <property type="match status" value="1"/>
</dbReference>
<dbReference type="Pfam" id="PF10240">
    <property type="entry name" value="DUF2464"/>
    <property type="match status" value="1"/>
</dbReference>
<dbReference type="PROSITE" id="PS51498">
    <property type="entry name" value="MABP"/>
    <property type="match status" value="1"/>
</dbReference>
<dbReference type="PROSITE" id="PS51497">
    <property type="entry name" value="UMA"/>
    <property type="match status" value="1"/>
</dbReference>
<gene>
    <name type="primary">Mvb12a</name>
    <name type="synonym">Fam125a</name>
</gene>
<evidence type="ECO:0000250" key="1"/>
<evidence type="ECO:0000250" key="2">
    <source>
        <dbReference type="UniProtKB" id="Q96EY5"/>
    </source>
</evidence>
<evidence type="ECO:0000255" key="3">
    <source>
        <dbReference type="PROSITE-ProRule" id="PRU00830"/>
    </source>
</evidence>
<evidence type="ECO:0000255" key="4">
    <source>
        <dbReference type="PROSITE-ProRule" id="PRU00831"/>
    </source>
</evidence>
<evidence type="ECO:0000256" key="5">
    <source>
        <dbReference type="SAM" id="MobiDB-lite"/>
    </source>
</evidence>
<evidence type="ECO:0000305" key="6"/>
<evidence type="ECO:0007744" key="7">
    <source>
    </source>
</evidence>
<comment type="function">
    <text evidence="1">Component of the ESCRT-I complex, a regulator of vesicular trafficking process. Required for the sorting of endocytic ubiquitinated cargos into multivesicular bodies. May be involved in the ligand-mediated internalization and down-regulation of EGF receptor (By similarity).</text>
</comment>
<comment type="subunit">
    <text evidence="1">Component of the ESCRT-I complex (endosomal sorting complex required for transport I) which consists of TSG101, VPS28, a VPS37 protein (VPS37A to -D) and MVB12A or MVB12B in a 1:1:1:1 stoichiometry. Interacts with CD2AP and CIN85/SH3KBP1. Interacts with CD2AP (via one of the SH3 domains). Interacts with TSG101; the association appears to be mediated by the TSG101-VPS37 binary subcomplex. Interacts with VPS28. Interacts with VPS37B; the association appears to be mediated by the TSG101-VPS37 binary subcomplex. Interacts with VPS37C; the association appears to be mediated by the TSG101-VPS37 binary subcomplex. Interacts with VPS37D; the association appears to be mediated by the TSG101-VPS37 binary subcomplex. Interacts with CEP55 (By similarity).</text>
</comment>
<comment type="subcellular location">
    <subcellularLocation>
        <location evidence="1">Cytoplasm</location>
        <location evidence="1">Cytoskeleton</location>
    </subcellularLocation>
    <subcellularLocation>
        <location evidence="1">Nucleus</location>
    </subcellularLocation>
    <subcellularLocation>
        <location>Endosome</location>
    </subcellularLocation>
    <subcellularLocation>
        <location>Cytoplasm</location>
        <location>Cytoskeleton</location>
        <location>Microtubule organizing center</location>
        <location>Centrosome</location>
    </subcellularLocation>
    <subcellularLocation>
        <location evidence="1">Late endosome membrane</location>
        <topology evidence="1">Peripheral membrane protein</topology>
    </subcellularLocation>
    <text evidence="1">Colocalizes with F-actin. Some fraction may be nuclear (By similarity).</text>
</comment>
<comment type="PTM">
    <text evidence="1">Phosphorylated on Tyr-202 upon EGF stimulation. Phosphorylation is required for interaction with CD2AP and CIN85/SH3KBP1 (By similarity).</text>
</comment>
<comment type="similarity">
    <text evidence="6">Belongs to the MVB12 family.</text>
</comment>